<comment type="function">
    <text evidence="1">Can catalyze the hydrolysis of ATP in the presence of single-stranded DNA, the ATP-dependent uptake of single-stranded DNA by duplex DNA, and the ATP-dependent hybridization of homologous single-stranded DNAs. It interacts with LexA causing its activation and leading to its autocatalytic cleavage.</text>
</comment>
<comment type="subcellular location">
    <subcellularLocation>
        <location evidence="1">Cytoplasm</location>
    </subcellularLocation>
</comment>
<comment type="similarity">
    <text evidence="1">Belongs to the RecA family.</text>
</comment>
<dbReference type="EMBL" id="CP000744">
    <property type="protein sequence ID" value="ABR82017.1"/>
    <property type="molecule type" value="Genomic_DNA"/>
</dbReference>
<dbReference type="RefSeq" id="WP_003092260.1">
    <property type="nucleotide sequence ID" value="NC_009656.1"/>
</dbReference>
<dbReference type="SMR" id="A6V1H2"/>
<dbReference type="GeneID" id="77219902"/>
<dbReference type="KEGG" id="pap:PSPA7_1523"/>
<dbReference type="HOGENOM" id="CLU_040469_3_2_6"/>
<dbReference type="Proteomes" id="UP000001582">
    <property type="component" value="Chromosome"/>
</dbReference>
<dbReference type="GO" id="GO:0005829">
    <property type="term" value="C:cytosol"/>
    <property type="evidence" value="ECO:0007669"/>
    <property type="project" value="TreeGrafter"/>
</dbReference>
<dbReference type="GO" id="GO:0005524">
    <property type="term" value="F:ATP binding"/>
    <property type="evidence" value="ECO:0007669"/>
    <property type="project" value="UniProtKB-UniRule"/>
</dbReference>
<dbReference type="GO" id="GO:0016887">
    <property type="term" value="F:ATP hydrolysis activity"/>
    <property type="evidence" value="ECO:0007669"/>
    <property type="project" value="InterPro"/>
</dbReference>
<dbReference type="GO" id="GO:0140664">
    <property type="term" value="F:ATP-dependent DNA damage sensor activity"/>
    <property type="evidence" value="ECO:0007669"/>
    <property type="project" value="InterPro"/>
</dbReference>
<dbReference type="GO" id="GO:0003684">
    <property type="term" value="F:damaged DNA binding"/>
    <property type="evidence" value="ECO:0007669"/>
    <property type="project" value="UniProtKB-UniRule"/>
</dbReference>
<dbReference type="GO" id="GO:0003697">
    <property type="term" value="F:single-stranded DNA binding"/>
    <property type="evidence" value="ECO:0007669"/>
    <property type="project" value="UniProtKB-UniRule"/>
</dbReference>
<dbReference type="GO" id="GO:0006310">
    <property type="term" value="P:DNA recombination"/>
    <property type="evidence" value="ECO:0007669"/>
    <property type="project" value="UniProtKB-UniRule"/>
</dbReference>
<dbReference type="GO" id="GO:0006281">
    <property type="term" value="P:DNA repair"/>
    <property type="evidence" value="ECO:0007669"/>
    <property type="project" value="UniProtKB-UniRule"/>
</dbReference>
<dbReference type="GO" id="GO:0009432">
    <property type="term" value="P:SOS response"/>
    <property type="evidence" value="ECO:0007669"/>
    <property type="project" value="UniProtKB-UniRule"/>
</dbReference>
<dbReference type="CDD" id="cd00983">
    <property type="entry name" value="RecA"/>
    <property type="match status" value="1"/>
</dbReference>
<dbReference type="FunFam" id="3.40.50.300:FF:000087">
    <property type="entry name" value="Recombinase RecA"/>
    <property type="match status" value="1"/>
</dbReference>
<dbReference type="Gene3D" id="3.40.50.300">
    <property type="entry name" value="P-loop containing nucleotide triphosphate hydrolases"/>
    <property type="match status" value="1"/>
</dbReference>
<dbReference type="HAMAP" id="MF_00268">
    <property type="entry name" value="RecA"/>
    <property type="match status" value="1"/>
</dbReference>
<dbReference type="InterPro" id="IPR003593">
    <property type="entry name" value="AAA+_ATPase"/>
</dbReference>
<dbReference type="InterPro" id="IPR013765">
    <property type="entry name" value="DNA_recomb/repair_RecA"/>
</dbReference>
<dbReference type="InterPro" id="IPR020584">
    <property type="entry name" value="DNA_recomb/repair_RecA_CS"/>
</dbReference>
<dbReference type="InterPro" id="IPR027417">
    <property type="entry name" value="P-loop_NTPase"/>
</dbReference>
<dbReference type="InterPro" id="IPR049261">
    <property type="entry name" value="RecA-like_C"/>
</dbReference>
<dbReference type="InterPro" id="IPR049428">
    <property type="entry name" value="RecA-like_N"/>
</dbReference>
<dbReference type="InterPro" id="IPR020588">
    <property type="entry name" value="RecA_ATP-bd"/>
</dbReference>
<dbReference type="InterPro" id="IPR023400">
    <property type="entry name" value="RecA_C_sf"/>
</dbReference>
<dbReference type="InterPro" id="IPR020587">
    <property type="entry name" value="RecA_monomer-monomer_interface"/>
</dbReference>
<dbReference type="NCBIfam" id="TIGR02012">
    <property type="entry name" value="tigrfam_recA"/>
    <property type="match status" value="1"/>
</dbReference>
<dbReference type="PANTHER" id="PTHR45900:SF1">
    <property type="entry name" value="MITOCHONDRIAL DNA REPAIR PROTEIN RECA HOMOLOG-RELATED"/>
    <property type="match status" value="1"/>
</dbReference>
<dbReference type="PANTHER" id="PTHR45900">
    <property type="entry name" value="RECA"/>
    <property type="match status" value="1"/>
</dbReference>
<dbReference type="Pfam" id="PF00154">
    <property type="entry name" value="RecA"/>
    <property type="match status" value="1"/>
</dbReference>
<dbReference type="Pfam" id="PF21096">
    <property type="entry name" value="RecA_C"/>
    <property type="match status" value="1"/>
</dbReference>
<dbReference type="PRINTS" id="PR00142">
    <property type="entry name" value="RECA"/>
</dbReference>
<dbReference type="SMART" id="SM00382">
    <property type="entry name" value="AAA"/>
    <property type="match status" value="1"/>
</dbReference>
<dbReference type="SUPFAM" id="SSF52540">
    <property type="entry name" value="P-loop containing nucleoside triphosphate hydrolases"/>
    <property type="match status" value="1"/>
</dbReference>
<dbReference type="SUPFAM" id="SSF54752">
    <property type="entry name" value="RecA protein, C-terminal domain"/>
    <property type="match status" value="1"/>
</dbReference>
<dbReference type="PROSITE" id="PS00321">
    <property type="entry name" value="RECA_1"/>
    <property type="match status" value="1"/>
</dbReference>
<dbReference type="PROSITE" id="PS50162">
    <property type="entry name" value="RECA_2"/>
    <property type="match status" value="1"/>
</dbReference>
<dbReference type="PROSITE" id="PS50163">
    <property type="entry name" value="RECA_3"/>
    <property type="match status" value="1"/>
</dbReference>
<protein>
    <recommendedName>
        <fullName evidence="1">Protein RecA</fullName>
    </recommendedName>
    <alternativeName>
        <fullName evidence="1">Recombinase A</fullName>
    </alternativeName>
</protein>
<feature type="chain" id="PRO_1000047968" description="Protein RecA">
    <location>
        <begin position="1"/>
        <end position="346"/>
    </location>
</feature>
<feature type="binding site" evidence="1">
    <location>
        <begin position="65"/>
        <end position="72"/>
    </location>
    <ligand>
        <name>ATP</name>
        <dbReference type="ChEBI" id="CHEBI:30616"/>
    </ligand>
</feature>
<proteinExistence type="inferred from homology"/>
<gene>
    <name evidence="1" type="primary">recA</name>
    <name type="ordered locus">PSPA7_1523</name>
</gene>
<sequence>MDENKKRALAAALGQIERQFGKGAVMRMGDHERQAIPAISTGSLGLDIALGIGGLPKGRIVEIYGPESSGKTTLTLSVIAEAQKQGATCAFVDAEHALDPDYAGKLGVNVDDLLVSQPDTGEQALEITDMLVRSNAVDVIIVDSVAALVPKAEIEGEMGDAHVGLQARLMSQALRKITGNIKNANCLVIFINQIRMKIGVMFGNPETTTGGNALKFYASVRLDIRRTGAVKEGDEVVGSETRVKVVKNKVSPPFRQAEFQILYGKGIYRTGEIIDLGVQLGLVEKSGAWYSYQGSKIGQGKANAAKYLEDNPEIGSVLEKTIRDQLLAKSGPVKADAEEVADAEAD</sequence>
<organism>
    <name type="scientific">Pseudomonas paraeruginosa (strain DSM 24068 / PA7)</name>
    <name type="common">Pseudomonas aeruginosa (strain PA7)</name>
    <dbReference type="NCBI Taxonomy" id="381754"/>
    <lineage>
        <taxon>Bacteria</taxon>
        <taxon>Pseudomonadati</taxon>
        <taxon>Pseudomonadota</taxon>
        <taxon>Gammaproteobacteria</taxon>
        <taxon>Pseudomonadales</taxon>
        <taxon>Pseudomonadaceae</taxon>
        <taxon>Pseudomonas</taxon>
        <taxon>Pseudomonas paraeruginosa</taxon>
    </lineage>
</organism>
<reference key="1">
    <citation type="submission" date="2007-06" db="EMBL/GenBank/DDBJ databases">
        <authorList>
            <person name="Dodson R.J."/>
            <person name="Harkins D."/>
            <person name="Paulsen I.T."/>
        </authorList>
    </citation>
    <scope>NUCLEOTIDE SEQUENCE [LARGE SCALE GENOMIC DNA]</scope>
    <source>
        <strain>DSM 24068 / PA7</strain>
    </source>
</reference>
<keyword id="KW-0067">ATP-binding</keyword>
<keyword id="KW-0963">Cytoplasm</keyword>
<keyword id="KW-0227">DNA damage</keyword>
<keyword id="KW-0233">DNA recombination</keyword>
<keyword id="KW-0234">DNA repair</keyword>
<keyword id="KW-0238">DNA-binding</keyword>
<keyword id="KW-0547">Nucleotide-binding</keyword>
<keyword id="KW-0742">SOS response</keyword>
<accession>A6V1H2</accession>
<evidence type="ECO:0000255" key="1">
    <source>
        <dbReference type="HAMAP-Rule" id="MF_00268"/>
    </source>
</evidence>
<name>RECA_PSEP7</name>